<name>ISPF_BURTA</name>
<feature type="chain" id="PRO_0000237712" description="2-C-methyl-D-erythritol 2,4-cyclodiphosphate synthase">
    <location>
        <begin position="1"/>
        <end position="162"/>
    </location>
</feature>
<feature type="binding site" evidence="1">
    <location>
        <begin position="10"/>
        <end position="12"/>
    </location>
    <ligand>
        <name>4-CDP-2-C-methyl-D-erythritol 2-phosphate</name>
        <dbReference type="ChEBI" id="CHEBI:57919"/>
    </ligand>
</feature>
<feature type="binding site" evidence="1">
    <location>
        <position position="10"/>
    </location>
    <ligand>
        <name>a divalent metal cation</name>
        <dbReference type="ChEBI" id="CHEBI:60240"/>
    </ligand>
</feature>
<feature type="binding site" evidence="1">
    <location>
        <position position="12"/>
    </location>
    <ligand>
        <name>a divalent metal cation</name>
        <dbReference type="ChEBI" id="CHEBI:60240"/>
    </ligand>
</feature>
<feature type="binding site" evidence="1">
    <location>
        <begin position="36"/>
        <end position="37"/>
    </location>
    <ligand>
        <name>4-CDP-2-C-methyl-D-erythritol 2-phosphate</name>
        <dbReference type="ChEBI" id="CHEBI:57919"/>
    </ligand>
</feature>
<feature type="binding site" evidence="1">
    <location>
        <position position="44"/>
    </location>
    <ligand>
        <name>a divalent metal cation</name>
        <dbReference type="ChEBI" id="CHEBI:60240"/>
    </ligand>
</feature>
<feature type="binding site" evidence="1">
    <location>
        <begin position="58"/>
        <end position="60"/>
    </location>
    <ligand>
        <name>4-CDP-2-C-methyl-D-erythritol 2-phosphate</name>
        <dbReference type="ChEBI" id="CHEBI:57919"/>
    </ligand>
</feature>
<feature type="binding site" evidence="1">
    <location>
        <begin position="63"/>
        <end position="67"/>
    </location>
    <ligand>
        <name>4-CDP-2-C-methyl-D-erythritol 2-phosphate</name>
        <dbReference type="ChEBI" id="CHEBI:57919"/>
    </ligand>
</feature>
<feature type="binding site" evidence="1">
    <location>
        <position position="144"/>
    </location>
    <ligand>
        <name>4-CDP-2-C-methyl-D-erythritol 2-phosphate</name>
        <dbReference type="ChEBI" id="CHEBI:57919"/>
    </ligand>
</feature>
<feature type="site" description="Transition state stabilizer" evidence="1">
    <location>
        <position position="36"/>
    </location>
</feature>
<feature type="site" description="Transition state stabilizer" evidence="1">
    <location>
        <position position="135"/>
    </location>
</feature>
<protein>
    <recommendedName>
        <fullName evidence="1">2-C-methyl-D-erythritol 2,4-cyclodiphosphate synthase</fullName>
        <shortName evidence="1">MECDP-synthase</shortName>
        <shortName evidence="1">MECPP-synthase</shortName>
        <shortName evidence="1">MECPS</shortName>
        <ecNumber evidence="1">4.6.1.12</ecNumber>
    </recommendedName>
</protein>
<keyword id="KW-0414">Isoprene biosynthesis</keyword>
<keyword id="KW-0456">Lyase</keyword>
<keyword id="KW-0479">Metal-binding</keyword>
<organism>
    <name type="scientific">Burkholderia thailandensis (strain ATCC 700388 / DSM 13276 / CCUG 48851 / CIP 106301 / E264)</name>
    <dbReference type="NCBI Taxonomy" id="271848"/>
    <lineage>
        <taxon>Bacteria</taxon>
        <taxon>Pseudomonadati</taxon>
        <taxon>Pseudomonadota</taxon>
        <taxon>Betaproteobacteria</taxon>
        <taxon>Burkholderiales</taxon>
        <taxon>Burkholderiaceae</taxon>
        <taxon>Burkholderia</taxon>
        <taxon>pseudomallei group</taxon>
    </lineage>
</organism>
<proteinExistence type="inferred from homology"/>
<evidence type="ECO:0000255" key="1">
    <source>
        <dbReference type="HAMAP-Rule" id="MF_00107"/>
    </source>
</evidence>
<sequence length="162" mass="17117">MDFRIGQGYDVHQLVPGRPLIIGGVTIPYERGLLGHSDADVLLHAITDALFGAAALGDIGRHFSDTDPRFKGADSRALLRECAARVAQAGFSIRNVDSTIIAQAPKLAPHIDAMRANIAADLGLPLDRVNVKAKTNEKLGYLGRGEGIEAQAAALVVREAAA</sequence>
<reference key="1">
    <citation type="journal article" date="2005" name="BMC Genomics">
        <title>Bacterial genome adaptation to niches: divergence of the potential virulence genes in three Burkholderia species of different survival strategies.</title>
        <authorList>
            <person name="Kim H.S."/>
            <person name="Schell M.A."/>
            <person name="Yu Y."/>
            <person name="Ulrich R.L."/>
            <person name="Sarria S.H."/>
            <person name="Nierman W.C."/>
            <person name="DeShazer D."/>
        </authorList>
    </citation>
    <scope>NUCLEOTIDE SEQUENCE [LARGE SCALE GENOMIC DNA]</scope>
    <source>
        <strain>ATCC 700388 / DSM 13276 / CCUG 48851 / CIP 106301 / E264</strain>
    </source>
</reference>
<comment type="function">
    <text evidence="1">Involved in the biosynthesis of isopentenyl diphosphate (IPP) and dimethylallyl diphosphate (DMAPP), two major building blocks of isoprenoid compounds. Catalyzes the conversion of 4-diphosphocytidyl-2-C-methyl-D-erythritol 2-phosphate (CDP-ME2P) to 2-C-methyl-D-erythritol 2,4-cyclodiphosphate (ME-CPP) with a corresponding release of cytidine 5-monophosphate (CMP).</text>
</comment>
<comment type="catalytic activity">
    <reaction evidence="1">
        <text>4-CDP-2-C-methyl-D-erythritol 2-phosphate = 2-C-methyl-D-erythritol 2,4-cyclic diphosphate + CMP</text>
        <dbReference type="Rhea" id="RHEA:23864"/>
        <dbReference type="ChEBI" id="CHEBI:57919"/>
        <dbReference type="ChEBI" id="CHEBI:58483"/>
        <dbReference type="ChEBI" id="CHEBI:60377"/>
        <dbReference type="EC" id="4.6.1.12"/>
    </reaction>
</comment>
<comment type="cofactor">
    <cofactor evidence="1">
        <name>a divalent metal cation</name>
        <dbReference type="ChEBI" id="CHEBI:60240"/>
    </cofactor>
    <text evidence="1">Binds 1 divalent metal cation per subunit.</text>
</comment>
<comment type="pathway">
    <text evidence="1">Isoprenoid biosynthesis; isopentenyl diphosphate biosynthesis via DXP pathway; isopentenyl diphosphate from 1-deoxy-D-xylulose 5-phosphate: step 4/6.</text>
</comment>
<comment type="subunit">
    <text evidence="1">Homotrimer.</text>
</comment>
<comment type="similarity">
    <text evidence="1">Belongs to the IspF family.</text>
</comment>
<gene>
    <name evidence="1" type="primary">ispF</name>
    <name type="ordered locus">BTH_I2090</name>
</gene>
<dbReference type="EC" id="4.6.1.12" evidence="1"/>
<dbReference type="EMBL" id="CP000086">
    <property type="protein sequence ID" value="ABC36602.1"/>
    <property type="molecule type" value="Genomic_DNA"/>
</dbReference>
<dbReference type="RefSeq" id="WP_009890559.1">
    <property type="nucleotide sequence ID" value="NZ_CP008785.1"/>
</dbReference>
<dbReference type="SMR" id="Q2SWT5"/>
<dbReference type="GeneID" id="45121818"/>
<dbReference type="KEGG" id="bte:BTH_I2090"/>
<dbReference type="HOGENOM" id="CLU_084630_2_0_4"/>
<dbReference type="UniPathway" id="UPA00056">
    <property type="reaction ID" value="UER00095"/>
</dbReference>
<dbReference type="Proteomes" id="UP000001930">
    <property type="component" value="Chromosome I"/>
</dbReference>
<dbReference type="GO" id="GO:0008685">
    <property type="term" value="F:2-C-methyl-D-erythritol 2,4-cyclodiphosphate synthase activity"/>
    <property type="evidence" value="ECO:0007669"/>
    <property type="project" value="UniProtKB-UniRule"/>
</dbReference>
<dbReference type="GO" id="GO:0046872">
    <property type="term" value="F:metal ion binding"/>
    <property type="evidence" value="ECO:0007669"/>
    <property type="project" value="UniProtKB-KW"/>
</dbReference>
<dbReference type="GO" id="GO:0019288">
    <property type="term" value="P:isopentenyl diphosphate biosynthetic process, methylerythritol 4-phosphate pathway"/>
    <property type="evidence" value="ECO:0007669"/>
    <property type="project" value="UniProtKB-UniRule"/>
</dbReference>
<dbReference type="GO" id="GO:0016114">
    <property type="term" value="P:terpenoid biosynthetic process"/>
    <property type="evidence" value="ECO:0007669"/>
    <property type="project" value="InterPro"/>
</dbReference>
<dbReference type="CDD" id="cd00554">
    <property type="entry name" value="MECDP_synthase"/>
    <property type="match status" value="1"/>
</dbReference>
<dbReference type="FunFam" id="3.30.1330.50:FF:000001">
    <property type="entry name" value="2-C-methyl-D-erythritol 2,4-cyclodiphosphate synthase"/>
    <property type="match status" value="1"/>
</dbReference>
<dbReference type="Gene3D" id="3.30.1330.50">
    <property type="entry name" value="2-C-methyl-D-erythritol 2,4-cyclodiphosphate synthase"/>
    <property type="match status" value="1"/>
</dbReference>
<dbReference type="HAMAP" id="MF_00107">
    <property type="entry name" value="IspF"/>
    <property type="match status" value="1"/>
</dbReference>
<dbReference type="InterPro" id="IPR003526">
    <property type="entry name" value="MECDP_synthase"/>
</dbReference>
<dbReference type="InterPro" id="IPR020555">
    <property type="entry name" value="MECDP_synthase_CS"/>
</dbReference>
<dbReference type="InterPro" id="IPR036571">
    <property type="entry name" value="MECDP_synthase_sf"/>
</dbReference>
<dbReference type="NCBIfam" id="TIGR00151">
    <property type="entry name" value="ispF"/>
    <property type="match status" value="1"/>
</dbReference>
<dbReference type="PANTHER" id="PTHR43181">
    <property type="entry name" value="2-C-METHYL-D-ERYTHRITOL 2,4-CYCLODIPHOSPHATE SYNTHASE, CHLOROPLASTIC"/>
    <property type="match status" value="1"/>
</dbReference>
<dbReference type="PANTHER" id="PTHR43181:SF1">
    <property type="entry name" value="2-C-METHYL-D-ERYTHRITOL 2,4-CYCLODIPHOSPHATE SYNTHASE, CHLOROPLASTIC"/>
    <property type="match status" value="1"/>
</dbReference>
<dbReference type="Pfam" id="PF02542">
    <property type="entry name" value="YgbB"/>
    <property type="match status" value="1"/>
</dbReference>
<dbReference type="SUPFAM" id="SSF69765">
    <property type="entry name" value="IpsF-like"/>
    <property type="match status" value="1"/>
</dbReference>
<dbReference type="PROSITE" id="PS01350">
    <property type="entry name" value="ISPF"/>
    <property type="match status" value="1"/>
</dbReference>
<accession>Q2SWT5</accession>